<protein>
    <recommendedName>
        <fullName>Spore germination protein B2</fullName>
    </recommendedName>
</protein>
<name>GERBB_BACSU</name>
<accession>P39570</accession>
<feature type="chain" id="PRO_0000054256" description="Spore germination protein B2">
    <location>
        <begin position="1"/>
        <end position="368"/>
    </location>
</feature>
<feature type="transmembrane region" description="Helical" evidence="1">
    <location>
        <begin position="10"/>
        <end position="30"/>
    </location>
</feature>
<feature type="transmembrane region" description="Helical" evidence="1">
    <location>
        <begin position="43"/>
        <end position="63"/>
    </location>
</feature>
<feature type="transmembrane region" description="Helical" evidence="1">
    <location>
        <begin position="82"/>
        <end position="102"/>
    </location>
</feature>
<feature type="transmembrane region" description="Helical" evidence="1">
    <location>
        <begin position="120"/>
        <end position="140"/>
    </location>
</feature>
<feature type="transmembrane region" description="Helical" evidence="1">
    <location>
        <begin position="145"/>
        <end position="165"/>
    </location>
</feature>
<feature type="transmembrane region" description="Helical" evidence="1">
    <location>
        <begin position="187"/>
        <end position="207"/>
    </location>
</feature>
<feature type="transmembrane region" description="Helical" evidence="1">
    <location>
        <begin position="217"/>
        <end position="237"/>
    </location>
</feature>
<feature type="transmembrane region" description="Helical" evidence="1">
    <location>
        <begin position="282"/>
        <end position="302"/>
    </location>
</feature>
<feature type="transmembrane region" description="Helical" evidence="1">
    <location>
        <begin position="308"/>
        <end position="328"/>
    </location>
</feature>
<feature type="transmembrane region" description="Helical" evidence="1">
    <location>
        <begin position="338"/>
        <end position="358"/>
    </location>
</feature>
<feature type="sequence conflict" description="In Ref. 1; AAA22467." evidence="2" ref="1">
    <original>P</original>
    <variation>R</variation>
    <location>
        <position position="119"/>
    </location>
</feature>
<proteinExistence type="evidence at transcript level"/>
<organism>
    <name type="scientific">Bacillus subtilis (strain 168)</name>
    <dbReference type="NCBI Taxonomy" id="224308"/>
    <lineage>
        <taxon>Bacteria</taxon>
        <taxon>Bacillati</taxon>
        <taxon>Bacillota</taxon>
        <taxon>Bacilli</taxon>
        <taxon>Bacillales</taxon>
        <taxon>Bacillaceae</taxon>
        <taxon>Bacillus</taxon>
    </lineage>
</organism>
<reference key="1">
    <citation type="journal article" date="1994" name="Microbiology">
        <title>The gerB region of the Bacillus subtilis 168 chromosome encodes a homologue of the gerA spore germination operon.</title>
        <authorList>
            <person name="Corfe B.M."/>
            <person name="Sammons R.L."/>
            <person name="Smith D.A."/>
            <person name="Maueel C."/>
        </authorList>
    </citation>
    <scope>NUCLEOTIDE SEQUENCE [GENOMIC DNA]</scope>
    <source>
        <strain>168</strain>
    </source>
</reference>
<reference key="2">
    <citation type="journal article" date="1997" name="Nature">
        <title>The complete genome sequence of the Gram-positive bacterium Bacillus subtilis.</title>
        <authorList>
            <person name="Kunst F."/>
            <person name="Ogasawara N."/>
            <person name="Moszer I."/>
            <person name="Albertini A.M."/>
            <person name="Alloni G."/>
            <person name="Azevedo V."/>
            <person name="Bertero M.G."/>
            <person name="Bessieres P."/>
            <person name="Bolotin A."/>
            <person name="Borchert S."/>
            <person name="Borriss R."/>
            <person name="Boursier L."/>
            <person name="Brans A."/>
            <person name="Braun M."/>
            <person name="Brignell S.C."/>
            <person name="Bron S."/>
            <person name="Brouillet S."/>
            <person name="Bruschi C.V."/>
            <person name="Caldwell B."/>
            <person name="Capuano V."/>
            <person name="Carter N.M."/>
            <person name="Choi S.-K."/>
            <person name="Codani J.-J."/>
            <person name="Connerton I.F."/>
            <person name="Cummings N.J."/>
            <person name="Daniel R.A."/>
            <person name="Denizot F."/>
            <person name="Devine K.M."/>
            <person name="Duesterhoeft A."/>
            <person name="Ehrlich S.D."/>
            <person name="Emmerson P.T."/>
            <person name="Entian K.-D."/>
            <person name="Errington J."/>
            <person name="Fabret C."/>
            <person name="Ferrari E."/>
            <person name="Foulger D."/>
            <person name="Fritz C."/>
            <person name="Fujita M."/>
            <person name="Fujita Y."/>
            <person name="Fuma S."/>
            <person name="Galizzi A."/>
            <person name="Galleron N."/>
            <person name="Ghim S.-Y."/>
            <person name="Glaser P."/>
            <person name="Goffeau A."/>
            <person name="Golightly E.J."/>
            <person name="Grandi G."/>
            <person name="Guiseppi G."/>
            <person name="Guy B.J."/>
            <person name="Haga K."/>
            <person name="Haiech J."/>
            <person name="Harwood C.R."/>
            <person name="Henaut A."/>
            <person name="Hilbert H."/>
            <person name="Holsappel S."/>
            <person name="Hosono S."/>
            <person name="Hullo M.-F."/>
            <person name="Itaya M."/>
            <person name="Jones L.-M."/>
            <person name="Joris B."/>
            <person name="Karamata D."/>
            <person name="Kasahara Y."/>
            <person name="Klaerr-Blanchard M."/>
            <person name="Klein C."/>
            <person name="Kobayashi Y."/>
            <person name="Koetter P."/>
            <person name="Koningstein G."/>
            <person name="Krogh S."/>
            <person name="Kumano M."/>
            <person name="Kurita K."/>
            <person name="Lapidus A."/>
            <person name="Lardinois S."/>
            <person name="Lauber J."/>
            <person name="Lazarevic V."/>
            <person name="Lee S.-M."/>
            <person name="Levine A."/>
            <person name="Liu H."/>
            <person name="Masuda S."/>
            <person name="Mauel C."/>
            <person name="Medigue C."/>
            <person name="Medina N."/>
            <person name="Mellado R.P."/>
            <person name="Mizuno M."/>
            <person name="Moestl D."/>
            <person name="Nakai S."/>
            <person name="Noback M."/>
            <person name="Noone D."/>
            <person name="O'Reilly M."/>
            <person name="Ogawa K."/>
            <person name="Ogiwara A."/>
            <person name="Oudega B."/>
            <person name="Park S.-H."/>
            <person name="Parro V."/>
            <person name="Pohl T.M."/>
            <person name="Portetelle D."/>
            <person name="Porwollik S."/>
            <person name="Prescott A.M."/>
            <person name="Presecan E."/>
            <person name="Pujic P."/>
            <person name="Purnelle B."/>
            <person name="Rapoport G."/>
            <person name="Rey M."/>
            <person name="Reynolds S."/>
            <person name="Rieger M."/>
            <person name="Rivolta C."/>
            <person name="Rocha E."/>
            <person name="Roche B."/>
            <person name="Rose M."/>
            <person name="Sadaie Y."/>
            <person name="Sato T."/>
            <person name="Scanlan E."/>
            <person name="Schleich S."/>
            <person name="Schroeter R."/>
            <person name="Scoffone F."/>
            <person name="Sekiguchi J."/>
            <person name="Sekowska A."/>
            <person name="Seror S.J."/>
            <person name="Serror P."/>
            <person name="Shin B.-S."/>
            <person name="Soldo B."/>
            <person name="Sorokin A."/>
            <person name="Tacconi E."/>
            <person name="Takagi T."/>
            <person name="Takahashi H."/>
            <person name="Takemaru K."/>
            <person name="Takeuchi M."/>
            <person name="Tamakoshi A."/>
            <person name="Tanaka T."/>
            <person name="Terpstra P."/>
            <person name="Tognoni A."/>
            <person name="Tosato V."/>
            <person name="Uchiyama S."/>
            <person name="Vandenbol M."/>
            <person name="Vannier F."/>
            <person name="Vassarotti A."/>
            <person name="Viari A."/>
            <person name="Wambutt R."/>
            <person name="Wedler E."/>
            <person name="Wedler H."/>
            <person name="Weitzenegger T."/>
            <person name="Winters P."/>
            <person name="Wipat A."/>
            <person name="Yamamoto H."/>
            <person name="Yamane K."/>
            <person name="Yasumoto K."/>
            <person name="Yata K."/>
            <person name="Yoshida K."/>
            <person name="Yoshikawa H.-F."/>
            <person name="Zumstein E."/>
            <person name="Yoshikawa H."/>
            <person name="Danchin A."/>
        </authorList>
    </citation>
    <scope>NUCLEOTIDE SEQUENCE [LARGE SCALE GENOMIC DNA]</scope>
    <source>
        <strain>168</strain>
    </source>
</reference>
<reference key="3">
    <citation type="journal article" date="2009" name="Microbiology">
        <title>From a consortium sequence to a unified sequence: the Bacillus subtilis 168 reference genome a decade later.</title>
        <authorList>
            <person name="Barbe V."/>
            <person name="Cruveiller S."/>
            <person name="Kunst F."/>
            <person name="Lenoble P."/>
            <person name="Meurice G."/>
            <person name="Sekowska A."/>
            <person name="Vallenet D."/>
            <person name="Wang T."/>
            <person name="Moszer I."/>
            <person name="Medigue C."/>
            <person name="Danchin A."/>
        </authorList>
    </citation>
    <scope>SEQUENCE REVISION TO 119</scope>
</reference>
<comment type="function">
    <text>Involved in the response to the germinative mixture of L-asparagine, glucose, fructose and potassium ions (AGFK). Could be an amino acid transporter. Cannot stimulate germination in the absence of gerD and gerK gene products (fructose and glucose receptors, respectively).</text>
</comment>
<comment type="subcellular location">
    <subcellularLocation>
        <location>Cell membrane</location>
        <topology>Multi-pass membrane protein</topology>
    </subcellularLocation>
</comment>
<comment type="developmental stage">
    <text>Expressed in the forespore compartment of the developing sporangium.</text>
</comment>
<comment type="similarity">
    <text evidence="2">Belongs to the amino acid-polyamine-organocation (APC) superfamily. Spore germination protein (SGP) (TC 2.A.3.9) family.</text>
</comment>
<sequence length="368" mass="41650">MRKSEHKLTFMQTLIMISSTLIGAGVLTLPRSAAETGSPSGWLMILLQGVIFIIIVLLFLPFLQKNSGKTLFKLNSIVAGKFIGFLLNLYICLYFIGIVCFQARILGEVVGFFLLKNTPMAVVVFIFLAVAIYHVGGGVYSIAKVYAYIFPITLIIFMMLLMFSFRLFQLDFIRPVFEGGYQSFFSLFPKTLLYFSGFEIIFYLVPFMRDPKQVKKAVALGIATSTLFYSITLLIVIGCMTVAEAKTVTWPTISLIHALEVPGIFIERFDLFLQLTWTAQQFACMLGSFKGAHIGLTEIFHLKNKNNAWLLTAMLAATFFITMYPKDLNDVFYYGTLLGYAFLIVITIPFFVWFLSWIQKKIGRGQLQ</sequence>
<dbReference type="EMBL" id="L16960">
    <property type="protein sequence ID" value="AAA22467.1"/>
    <property type="molecule type" value="Genomic_DNA"/>
</dbReference>
<dbReference type="EMBL" id="AL009126">
    <property type="protein sequence ID" value="CAB15598.2"/>
    <property type="molecule type" value="Genomic_DNA"/>
</dbReference>
<dbReference type="PIR" id="I39856">
    <property type="entry name" value="I39856"/>
</dbReference>
<dbReference type="RefSeq" id="NP_391462.2">
    <property type="nucleotide sequence ID" value="NC_000964.3"/>
</dbReference>
<dbReference type="RefSeq" id="WP_003244581.1">
    <property type="nucleotide sequence ID" value="NZ_OZ025638.1"/>
</dbReference>
<dbReference type="SMR" id="P39570"/>
<dbReference type="FunCoup" id="P39570">
    <property type="interactions" value="32"/>
</dbReference>
<dbReference type="STRING" id="224308.BSU35810"/>
<dbReference type="TCDB" id="2.A.3.9.2">
    <property type="family name" value="the amino acid-polyamine-organocation (apc) family"/>
</dbReference>
<dbReference type="PaxDb" id="224308-BSU35810"/>
<dbReference type="EnsemblBacteria" id="CAB15598">
    <property type="protein sequence ID" value="CAB15598"/>
    <property type="gene ID" value="BSU_35810"/>
</dbReference>
<dbReference type="GeneID" id="936827"/>
<dbReference type="KEGG" id="bsu:BSU35810"/>
<dbReference type="PATRIC" id="fig|224308.179.peg.3877"/>
<dbReference type="eggNOG" id="COG0814">
    <property type="taxonomic scope" value="Bacteria"/>
</dbReference>
<dbReference type="InParanoid" id="P39570"/>
<dbReference type="OrthoDB" id="2661055at2"/>
<dbReference type="PhylomeDB" id="P39570"/>
<dbReference type="BioCyc" id="BSUB:BSU35810-MONOMER"/>
<dbReference type="Proteomes" id="UP000001570">
    <property type="component" value="Chromosome"/>
</dbReference>
<dbReference type="GO" id="GO:0005886">
    <property type="term" value="C:plasma membrane"/>
    <property type="evidence" value="ECO:0007669"/>
    <property type="project" value="UniProtKB-SubCell"/>
</dbReference>
<dbReference type="GO" id="GO:0006865">
    <property type="term" value="P:amino acid transport"/>
    <property type="evidence" value="ECO:0007669"/>
    <property type="project" value="UniProtKB-KW"/>
</dbReference>
<dbReference type="GO" id="GO:0009847">
    <property type="term" value="P:spore germination"/>
    <property type="evidence" value="ECO:0007669"/>
    <property type="project" value="InterPro"/>
</dbReference>
<dbReference type="Gene3D" id="1.20.1740.10">
    <property type="entry name" value="Amino acid/polyamine transporter I"/>
    <property type="match status" value="1"/>
</dbReference>
<dbReference type="InterPro" id="IPR004761">
    <property type="entry name" value="Spore_GerAB"/>
</dbReference>
<dbReference type="NCBIfam" id="TIGR00912">
    <property type="entry name" value="2A0309"/>
    <property type="match status" value="1"/>
</dbReference>
<dbReference type="PANTHER" id="PTHR34975">
    <property type="entry name" value="SPORE GERMINATION PROTEIN A2"/>
    <property type="match status" value="1"/>
</dbReference>
<dbReference type="PANTHER" id="PTHR34975:SF2">
    <property type="entry name" value="SPORE GERMINATION PROTEIN A2"/>
    <property type="match status" value="1"/>
</dbReference>
<dbReference type="Pfam" id="PF03845">
    <property type="entry name" value="Spore_permease"/>
    <property type="match status" value="1"/>
</dbReference>
<dbReference type="PIRSF" id="PIRSF006060">
    <property type="entry name" value="AA_transporter"/>
    <property type="match status" value="1"/>
</dbReference>
<evidence type="ECO:0000255" key="1"/>
<evidence type="ECO:0000305" key="2"/>
<keyword id="KW-0029">Amino-acid transport</keyword>
<keyword id="KW-1003">Cell membrane</keyword>
<keyword id="KW-0309">Germination</keyword>
<keyword id="KW-0472">Membrane</keyword>
<keyword id="KW-1185">Reference proteome</keyword>
<keyword id="KW-0812">Transmembrane</keyword>
<keyword id="KW-1133">Transmembrane helix</keyword>
<keyword id="KW-0813">Transport</keyword>
<gene>
    <name type="primary">gerBB</name>
    <name type="ordered locus">BSU35810</name>
</gene>